<gene>
    <name type="primary">AIM9</name>
    <name type="synonym">FMP29</name>
    <name type="ordered locus">PAS_chr1-4_0684</name>
</gene>
<reference key="1">
    <citation type="journal article" date="2009" name="Nat. Biotechnol.">
        <title>Genome sequence of the recombinant protein production host Pichia pastoris.</title>
        <authorList>
            <person name="De Schutter K."/>
            <person name="Lin Y.-C."/>
            <person name="Tiels P."/>
            <person name="Van Hecke A."/>
            <person name="Glinka S."/>
            <person name="Weber-Lehmann J."/>
            <person name="Rouze P."/>
            <person name="Van de Peer Y."/>
            <person name="Callewaert N."/>
        </authorList>
    </citation>
    <scope>NUCLEOTIDE SEQUENCE [LARGE SCALE GENOMIC DNA]</scope>
    <source>
        <strain>GS115 / ATCC 20864</strain>
    </source>
</reference>
<name>AIM9_KOMPG</name>
<accession>C4QYL7</accession>
<evidence type="ECO:0000250" key="1"/>
<evidence type="ECO:0000255" key="2"/>
<evidence type="ECO:0000305" key="3"/>
<comment type="subcellular location">
    <subcellularLocation>
        <location evidence="1">Mitochondrion</location>
    </subcellularLocation>
</comment>
<comment type="similarity">
    <text evidence="3">Belongs to the AIM9 family.</text>
</comment>
<organism>
    <name type="scientific">Komagataella phaffii (strain GS115 / ATCC 20864)</name>
    <name type="common">Yeast</name>
    <name type="synonym">Pichia pastoris</name>
    <dbReference type="NCBI Taxonomy" id="644223"/>
    <lineage>
        <taxon>Eukaryota</taxon>
        <taxon>Fungi</taxon>
        <taxon>Dikarya</taxon>
        <taxon>Ascomycota</taxon>
        <taxon>Saccharomycotina</taxon>
        <taxon>Pichiomycetes</taxon>
        <taxon>Pichiales</taxon>
        <taxon>Pichiaceae</taxon>
        <taxon>Komagataella</taxon>
    </lineage>
</organism>
<sequence>MLKLATKLAPCSRVVYAISKPSILVSANQRRFNSSTPNDTVYTSLNDENDPQRDAFFQYTWGTWLKDDKEQKQKRVTRFSIEGVNSLLAKMYDTSRETMKSSNVLTAPVWDKELKATLLPSNLDLDTMGVLNPNEKIVVTQMASIHEGKHHRVYKLDTNTQKSFVLRLPYNLDGDFYNDVRVKSEAATLDFLRLKLGMKVPKVFAYGADAQNNALRSVFTLMEFIEGDLLMKRWNPLVKDSEGSQEQLKSVLDPLADIQRRLLEVTFTKFGSLYFAHDVEESLRKDLPYKGEVDTMLVNRWKIGPSAERVFYRDGLPAEEVTKFTGPWKNAIDEVVAVADSALNSVELSLQKDLTQEQETILNRAKEVYQDFRSVAPVLFESDLTKSSLPNGTELFLPRLHVPELDPLNVVDNTAGPYLLDVEGANIKPFILHGYPVFLSYDGPKIYNVNEDVEGYSEMSPEEQRSYDVMYMRTRNQFIWEFALNARCRELVGAVAPAVKMIREPYLAAVRRGADVHHYLNVESSLLALSQMWDSYRAGHLVGAEKFPVKWAETEEAFNQKVQRHREDLIAYQTKIASAPFSATNGWVPQDMFNTLKEQGIIVQDGEDYVIKDE</sequence>
<dbReference type="EMBL" id="FN392319">
    <property type="protein sequence ID" value="CAY68341.1"/>
    <property type="molecule type" value="Genomic_DNA"/>
</dbReference>
<dbReference type="RefSeq" id="XP_002490621.1">
    <property type="nucleotide sequence ID" value="XM_002490576.1"/>
</dbReference>
<dbReference type="FunCoup" id="C4QYL7">
    <property type="interactions" value="22"/>
</dbReference>
<dbReference type="STRING" id="644223.C4QYL7"/>
<dbReference type="EnsemblFungi" id="CAY68341">
    <property type="protein sequence ID" value="CAY68341"/>
    <property type="gene ID" value="PAS_chr1-4_0684"/>
</dbReference>
<dbReference type="GeneID" id="8197075"/>
<dbReference type="KEGG" id="ppa:PAS_chr1-4_0684"/>
<dbReference type="eggNOG" id="ENOG502QV1E">
    <property type="taxonomic scope" value="Eukaryota"/>
</dbReference>
<dbReference type="HOGENOM" id="CLU_019189_0_1_1"/>
<dbReference type="InParanoid" id="C4QYL7"/>
<dbReference type="OMA" id="GWIPQDM"/>
<dbReference type="OrthoDB" id="2968323at2759"/>
<dbReference type="Proteomes" id="UP000000314">
    <property type="component" value="Chromosome 1"/>
</dbReference>
<dbReference type="GO" id="GO:0005739">
    <property type="term" value="C:mitochondrion"/>
    <property type="evidence" value="ECO:0007669"/>
    <property type="project" value="UniProtKB-SubCell"/>
</dbReference>
<dbReference type="InterPro" id="IPR002575">
    <property type="entry name" value="Aminoglycoside_PTrfase"/>
</dbReference>
<dbReference type="InterPro" id="IPR011009">
    <property type="entry name" value="Kinase-like_dom_sf"/>
</dbReference>
<dbReference type="InterPro" id="IPR051035">
    <property type="entry name" value="Mito_inheritance_9"/>
</dbReference>
<dbReference type="PANTHER" id="PTHR36091">
    <property type="entry name" value="ALTERED INHERITANCE OF MITOCHONDRIA PROTEIN 9, MITOCHONDRIAL"/>
    <property type="match status" value="1"/>
</dbReference>
<dbReference type="PANTHER" id="PTHR36091:SF1">
    <property type="entry name" value="ALTERED INHERITANCE OF MITOCHONDRIA PROTEIN 9, MITOCHONDRIAL"/>
    <property type="match status" value="1"/>
</dbReference>
<dbReference type="Pfam" id="PF01636">
    <property type="entry name" value="APH"/>
    <property type="match status" value="1"/>
</dbReference>
<dbReference type="SUPFAM" id="SSF56112">
    <property type="entry name" value="Protein kinase-like (PK-like)"/>
    <property type="match status" value="1"/>
</dbReference>
<keyword id="KW-0496">Mitochondrion</keyword>
<keyword id="KW-1185">Reference proteome</keyword>
<keyword id="KW-0809">Transit peptide</keyword>
<protein>
    <recommendedName>
        <fullName>Altered inheritance of mitochondria protein 9, mitochondrial</fullName>
    </recommendedName>
    <alternativeName>
        <fullName>Found in mitochondrial proteome protein 29</fullName>
    </alternativeName>
</protein>
<feature type="transit peptide" description="Mitochondrion" evidence="2">
    <location>
        <begin position="1"/>
        <end position="39"/>
    </location>
</feature>
<feature type="chain" id="PRO_0000408727" description="Altered inheritance of mitochondria protein 9, mitochondrial">
    <location>
        <begin position="40"/>
        <end position="614"/>
    </location>
</feature>
<proteinExistence type="inferred from homology"/>